<sequence length="130" mass="14020">MSMQDPIADMLTRIRNGQAANHVSVKMPSAKLKVAIAKLLKDEGYIADYAVADEAKPELEVTLKYFQGQPVVETIQRVSRPGLRIYKGKNELPKVMGGLGVAIVSTSKGLMTDRAARLAGMGGEVICYVA</sequence>
<proteinExistence type="inferred from homology"/>
<comment type="function">
    <text evidence="1">One of the primary rRNA binding proteins, it binds directly to 16S rRNA central domain where it helps coordinate assembly of the platform of the 30S subunit.</text>
</comment>
<comment type="subunit">
    <text evidence="1">Part of the 30S ribosomal subunit. Contacts proteins S5 and S12.</text>
</comment>
<comment type="similarity">
    <text evidence="1">Belongs to the universal ribosomal protein uS8 family.</text>
</comment>
<evidence type="ECO:0000255" key="1">
    <source>
        <dbReference type="HAMAP-Rule" id="MF_01302"/>
    </source>
</evidence>
<evidence type="ECO:0000305" key="2"/>
<protein>
    <recommendedName>
        <fullName evidence="1">Small ribosomal subunit protein uS8</fullName>
    </recommendedName>
    <alternativeName>
        <fullName evidence="2">30S ribosomal protein S8</fullName>
    </alternativeName>
</protein>
<feature type="chain" id="PRO_1000051798" description="Small ribosomal subunit protein uS8">
    <location>
        <begin position="1"/>
        <end position="130"/>
    </location>
</feature>
<keyword id="KW-0687">Ribonucleoprotein</keyword>
<keyword id="KW-0689">Ribosomal protein</keyword>
<keyword id="KW-0694">RNA-binding</keyword>
<keyword id="KW-0699">rRNA-binding</keyword>
<gene>
    <name evidence="1" type="primary">rpsH</name>
    <name type="ordered locus">Shew185_0210</name>
</gene>
<accession>A6WHU2</accession>
<name>RS8_SHEB8</name>
<organism>
    <name type="scientific">Shewanella baltica (strain OS185)</name>
    <dbReference type="NCBI Taxonomy" id="402882"/>
    <lineage>
        <taxon>Bacteria</taxon>
        <taxon>Pseudomonadati</taxon>
        <taxon>Pseudomonadota</taxon>
        <taxon>Gammaproteobacteria</taxon>
        <taxon>Alteromonadales</taxon>
        <taxon>Shewanellaceae</taxon>
        <taxon>Shewanella</taxon>
    </lineage>
</organism>
<reference key="1">
    <citation type="submission" date="2007-07" db="EMBL/GenBank/DDBJ databases">
        <title>Complete sequence of chromosome of Shewanella baltica OS185.</title>
        <authorList>
            <consortium name="US DOE Joint Genome Institute"/>
            <person name="Copeland A."/>
            <person name="Lucas S."/>
            <person name="Lapidus A."/>
            <person name="Barry K."/>
            <person name="Glavina del Rio T."/>
            <person name="Dalin E."/>
            <person name="Tice H."/>
            <person name="Pitluck S."/>
            <person name="Sims D."/>
            <person name="Brettin T."/>
            <person name="Bruce D."/>
            <person name="Detter J.C."/>
            <person name="Han C."/>
            <person name="Schmutz J."/>
            <person name="Larimer F."/>
            <person name="Land M."/>
            <person name="Hauser L."/>
            <person name="Kyrpides N."/>
            <person name="Mikhailova N."/>
            <person name="Brettar I."/>
            <person name="Rodrigues J."/>
            <person name="Konstantinidis K."/>
            <person name="Tiedje J."/>
            <person name="Richardson P."/>
        </authorList>
    </citation>
    <scope>NUCLEOTIDE SEQUENCE [LARGE SCALE GENOMIC DNA]</scope>
    <source>
        <strain>OS185</strain>
    </source>
</reference>
<dbReference type="EMBL" id="CP000753">
    <property type="protein sequence ID" value="ABS06381.1"/>
    <property type="molecule type" value="Genomic_DNA"/>
</dbReference>
<dbReference type="RefSeq" id="WP_006083586.1">
    <property type="nucleotide sequence ID" value="NC_009665.1"/>
</dbReference>
<dbReference type="SMR" id="A6WHU2"/>
<dbReference type="GeneID" id="11770571"/>
<dbReference type="KEGG" id="sbm:Shew185_0210"/>
<dbReference type="HOGENOM" id="CLU_098428_0_0_6"/>
<dbReference type="GO" id="GO:1990904">
    <property type="term" value="C:ribonucleoprotein complex"/>
    <property type="evidence" value="ECO:0007669"/>
    <property type="project" value="UniProtKB-KW"/>
</dbReference>
<dbReference type="GO" id="GO:0005840">
    <property type="term" value="C:ribosome"/>
    <property type="evidence" value="ECO:0007669"/>
    <property type="project" value="UniProtKB-KW"/>
</dbReference>
<dbReference type="GO" id="GO:0019843">
    <property type="term" value="F:rRNA binding"/>
    <property type="evidence" value="ECO:0007669"/>
    <property type="project" value="UniProtKB-UniRule"/>
</dbReference>
<dbReference type="GO" id="GO:0003735">
    <property type="term" value="F:structural constituent of ribosome"/>
    <property type="evidence" value="ECO:0007669"/>
    <property type="project" value="InterPro"/>
</dbReference>
<dbReference type="GO" id="GO:0006412">
    <property type="term" value="P:translation"/>
    <property type="evidence" value="ECO:0007669"/>
    <property type="project" value="UniProtKB-UniRule"/>
</dbReference>
<dbReference type="FunFam" id="3.30.1370.30:FF:000003">
    <property type="entry name" value="30S ribosomal protein S8"/>
    <property type="match status" value="1"/>
</dbReference>
<dbReference type="FunFam" id="3.30.1490.10:FF:000001">
    <property type="entry name" value="30S ribosomal protein S8"/>
    <property type="match status" value="1"/>
</dbReference>
<dbReference type="Gene3D" id="3.30.1370.30">
    <property type="match status" value="1"/>
</dbReference>
<dbReference type="Gene3D" id="3.30.1490.10">
    <property type="match status" value="1"/>
</dbReference>
<dbReference type="HAMAP" id="MF_01302_B">
    <property type="entry name" value="Ribosomal_uS8_B"/>
    <property type="match status" value="1"/>
</dbReference>
<dbReference type="InterPro" id="IPR000630">
    <property type="entry name" value="Ribosomal_uS8"/>
</dbReference>
<dbReference type="InterPro" id="IPR047863">
    <property type="entry name" value="Ribosomal_uS8_CS"/>
</dbReference>
<dbReference type="InterPro" id="IPR035987">
    <property type="entry name" value="Ribosomal_uS8_sf"/>
</dbReference>
<dbReference type="NCBIfam" id="NF001109">
    <property type="entry name" value="PRK00136.1"/>
    <property type="match status" value="1"/>
</dbReference>
<dbReference type="PANTHER" id="PTHR11758">
    <property type="entry name" value="40S RIBOSOMAL PROTEIN S15A"/>
    <property type="match status" value="1"/>
</dbReference>
<dbReference type="Pfam" id="PF00410">
    <property type="entry name" value="Ribosomal_S8"/>
    <property type="match status" value="1"/>
</dbReference>
<dbReference type="SUPFAM" id="SSF56047">
    <property type="entry name" value="Ribosomal protein S8"/>
    <property type="match status" value="1"/>
</dbReference>
<dbReference type="PROSITE" id="PS00053">
    <property type="entry name" value="RIBOSOMAL_S8"/>
    <property type="match status" value="1"/>
</dbReference>